<proteinExistence type="evidence at transcript level"/>
<dbReference type="EMBL" id="AB018116">
    <property type="protein sequence ID" value="BAA97139.1"/>
    <property type="molecule type" value="Genomic_DNA"/>
</dbReference>
<dbReference type="EMBL" id="CP002688">
    <property type="protein sequence ID" value="AED96287.1"/>
    <property type="molecule type" value="Genomic_DNA"/>
</dbReference>
<dbReference type="EMBL" id="BT004599">
    <property type="protein sequence ID" value="AAO42845.1"/>
    <property type="molecule type" value="mRNA"/>
</dbReference>
<dbReference type="EMBL" id="AK227969">
    <property type="protein sequence ID" value="BAE99936.1"/>
    <property type="molecule type" value="mRNA"/>
</dbReference>
<dbReference type="RefSeq" id="NP_200111.1">
    <property type="nucleotide sequence ID" value="NM_124678.5"/>
</dbReference>
<dbReference type="SMR" id="Q9LVV3"/>
<dbReference type="FunCoup" id="Q9LVV3">
    <property type="interactions" value="64"/>
</dbReference>
<dbReference type="STRING" id="3702.Q9LVV3"/>
<dbReference type="iPTMnet" id="Q9LVV3"/>
<dbReference type="PaxDb" id="3702-AT5G52990.1"/>
<dbReference type="ProteomicsDB" id="235105"/>
<dbReference type="EnsemblPlants" id="AT5G52990.1">
    <property type="protein sequence ID" value="AT5G52990.1"/>
    <property type="gene ID" value="AT5G52990"/>
</dbReference>
<dbReference type="GeneID" id="835378"/>
<dbReference type="Gramene" id="AT5G52990.1">
    <property type="protein sequence ID" value="AT5G52990.1"/>
    <property type="gene ID" value="AT5G52990"/>
</dbReference>
<dbReference type="KEGG" id="ath:AT5G52990"/>
<dbReference type="Araport" id="AT5G52990"/>
<dbReference type="TAIR" id="AT5G52990"/>
<dbReference type="eggNOG" id="ENOG502RYW5">
    <property type="taxonomic scope" value="Eukaryota"/>
</dbReference>
<dbReference type="HOGENOM" id="CLU_088757_0_0_1"/>
<dbReference type="InParanoid" id="Q9LVV3"/>
<dbReference type="OMA" id="QKAKQVW"/>
<dbReference type="OrthoDB" id="1918034at2759"/>
<dbReference type="PhylomeDB" id="Q9LVV3"/>
<dbReference type="PRO" id="PR:Q9LVV3"/>
<dbReference type="Proteomes" id="UP000006548">
    <property type="component" value="Chromosome 5"/>
</dbReference>
<dbReference type="ExpressionAtlas" id="Q9LVV3">
    <property type="expression patterns" value="baseline and differential"/>
</dbReference>
<dbReference type="GO" id="GO:0016020">
    <property type="term" value="C:membrane"/>
    <property type="evidence" value="ECO:0007669"/>
    <property type="project" value="UniProtKB-SubCell"/>
</dbReference>
<dbReference type="GO" id="GO:0015031">
    <property type="term" value="P:protein transport"/>
    <property type="evidence" value="ECO:0007669"/>
    <property type="project" value="UniProtKB-KW"/>
</dbReference>
<dbReference type="CDD" id="cd14824">
    <property type="entry name" value="Longin"/>
    <property type="match status" value="1"/>
</dbReference>
<dbReference type="Gene3D" id="3.30.450.50">
    <property type="entry name" value="Longin domain"/>
    <property type="match status" value="1"/>
</dbReference>
<dbReference type="InterPro" id="IPR011012">
    <property type="entry name" value="Longin-like_dom_sf"/>
</dbReference>
<dbReference type="InterPro" id="IPR010908">
    <property type="entry name" value="Longin_dom"/>
</dbReference>
<dbReference type="InterPro" id="IPR044783">
    <property type="entry name" value="PHYL"/>
</dbReference>
<dbReference type="PANTHER" id="PTHR47461">
    <property type="entry name" value="PHYTOLONGIN PHYL1.2"/>
    <property type="match status" value="1"/>
</dbReference>
<dbReference type="PANTHER" id="PTHR47461:SF3">
    <property type="entry name" value="PHYTOLONGIN PHYL2.2"/>
    <property type="match status" value="1"/>
</dbReference>
<dbReference type="SUPFAM" id="SSF64356">
    <property type="entry name" value="SNARE-like"/>
    <property type="match status" value="1"/>
</dbReference>
<name>PHL22_ARATH</name>
<keyword id="KW-0175">Coiled coil</keyword>
<keyword id="KW-0472">Membrane</keyword>
<keyword id="KW-0653">Protein transport</keyword>
<keyword id="KW-1185">Reference proteome</keyword>
<keyword id="KW-0812">Transmembrane</keyword>
<keyword id="KW-1133">Transmembrane helix</keyword>
<keyword id="KW-0813">Transport</keyword>
<gene>
    <name evidence="4" type="primary">PHYL2.2</name>
    <name evidence="7" type="ordered locus">At5g52990</name>
    <name evidence="8" type="ORF">MNB8.5</name>
</gene>
<comment type="function">
    <text evidence="6">Non-SNARE longin protein involved in membrane-trafficking machinery.</text>
</comment>
<comment type="subcellular location">
    <subcellularLocation>
        <location evidence="2">Membrane</location>
        <topology evidence="1">Single-pass type IV membrane protein</topology>
    </subcellularLocation>
</comment>
<comment type="similarity">
    <text evidence="5">Belongs to the synaptobrevin family.</text>
</comment>
<feature type="chain" id="PRO_0000434814" description="Phytolongin Phyl2.2">
    <location>
        <begin position="1"/>
        <end position="272"/>
    </location>
</feature>
<feature type="transmembrane region" description="Helical; Anchor for type IV membrane protein" evidence="2">
    <location>
        <begin position="243"/>
        <end position="263"/>
    </location>
</feature>
<feature type="domain" description="Longin" evidence="3">
    <location>
        <begin position="12"/>
        <end position="116"/>
    </location>
</feature>
<feature type="sequence conflict" description="In Ref. 3; AAO42845 and 4; BAE99936." evidence="5" ref="3 4">
    <original>D</original>
    <variation>G</variation>
    <location>
        <position position="74"/>
    </location>
</feature>
<protein>
    <recommendedName>
        <fullName evidence="4">Phytolongin Phyl2.2</fullName>
    </recommendedName>
</protein>
<organism>
    <name type="scientific">Arabidopsis thaliana</name>
    <name type="common">Mouse-ear cress</name>
    <dbReference type="NCBI Taxonomy" id="3702"/>
    <lineage>
        <taxon>Eukaryota</taxon>
        <taxon>Viridiplantae</taxon>
        <taxon>Streptophyta</taxon>
        <taxon>Embryophyta</taxon>
        <taxon>Tracheophyta</taxon>
        <taxon>Spermatophyta</taxon>
        <taxon>Magnoliopsida</taxon>
        <taxon>eudicotyledons</taxon>
        <taxon>Gunneridae</taxon>
        <taxon>Pentapetalae</taxon>
        <taxon>rosids</taxon>
        <taxon>malvids</taxon>
        <taxon>Brassicales</taxon>
        <taxon>Brassicaceae</taxon>
        <taxon>Camelineae</taxon>
        <taxon>Arabidopsis</taxon>
    </lineage>
</organism>
<accession>Q9LVV3</accession>
<accession>Q84VZ3</accession>
<sequence>MISNPSLLSYTCIAKGTVVLAEFVSRQEPGIEAIALRCIENTPPHHSMFSHTVHKKTYTFAIDDDSFVYFSISDESMEKPESFWVLNRLRSAIEDLIKDGGSDVETLINPVSHCLQLKLDPVFAEIVGVVDLELLDMDLVGSPRSVARESRNPSIDSSKGRRAALMPLLGKPLKALKKKKRLHNEAKGGDSCEVGSIQEISEKNVDLCGNGNNGVLRKELRNGLLSDHHHRQKAKQIWKKHVWVVLMFDFCICAVLFGIWLWICEGFQCIQG</sequence>
<evidence type="ECO:0000250" key="1">
    <source>
        <dbReference type="UniProtKB" id="Q12255"/>
    </source>
</evidence>
<evidence type="ECO:0000255" key="2"/>
<evidence type="ECO:0000255" key="3">
    <source>
        <dbReference type="PROSITE-ProRule" id="PRU00231"/>
    </source>
</evidence>
<evidence type="ECO:0000303" key="4">
    <source>
    </source>
</evidence>
<evidence type="ECO:0000305" key="5"/>
<evidence type="ECO:0000305" key="6">
    <source>
    </source>
</evidence>
<evidence type="ECO:0000312" key="7">
    <source>
        <dbReference type="Araport" id="AT5G52990"/>
    </source>
</evidence>
<evidence type="ECO:0000312" key="8">
    <source>
        <dbReference type="EMBL" id="BAA97139.1"/>
    </source>
</evidence>
<reference key="1">
    <citation type="journal article" date="2000" name="DNA Res.">
        <title>Structural analysis of Arabidopsis thaliana chromosome 5. X. Sequence features of the regions of 3,076,755 bp covered by sixty P1 and TAC clones.</title>
        <authorList>
            <person name="Sato S."/>
            <person name="Nakamura Y."/>
            <person name="Kaneko T."/>
            <person name="Katoh T."/>
            <person name="Asamizu E."/>
            <person name="Kotani H."/>
            <person name="Tabata S."/>
        </authorList>
    </citation>
    <scope>NUCLEOTIDE SEQUENCE [LARGE SCALE GENOMIC DNA]</scope>
    <source>
        <strain>cv. Columbia</strain>
    </source>
</reference>
<reference key="2">
    <citation type="journal article" date="2017" name="Plant J.">
        <title>Araport11: a complete reannotation of the Arabidopsis thaliana reference genome.</title>
        <authorList>
            <person name="Cheng C.Y."/>
            <person name="Krishnakumar V."/>
            <person name="Chan A.P."/>
            <person name="Thibaud-Nissen F."/>
            <person name="Schobel S."/>
            <person name="Town C.D."/>
        </authorList>
    </citation>
    <scope>GENOME REANNOTATION</scope>
    <source>
        <strain>cv. Columbia</strain>
    </source>
</reference>
<reference key="3">
    <citation type="journal article" date="2003" name="Science">
        <title>Empirical analysis of transcriptional activity in the Arabidopsis genome.</title>
        <authorList>
            <person name="Yamada K."/>
            <person name="Lim J."/>
            <person name="Dale J.M."/>
            <person name="Chen H."/>
            <person name="Shinn P."/>
            <person name="Palm C.J."/>
            <person name="Southwick A.M."/>
            <person name="Wu H.C."/>
            <person name="Kim C.J."/>
            <person name="Nguyen M."/>
            <person name="Pham P.K."/>
            <person name="Cheuk R.F."/>
            <person name="Karlin-Newmann G."/>
            <person name="Liu S.X."/>
            <person name="Lam B."/>
            <person name="Sakano H."/>
            <person name="Wu T."/>
            <person name="Yu G."/>
            <person name="Miranda M."/>
            <person name="Quach H.L."/>
            <person name="Tripp M."/>
            <person name="Chang C.H."/>
            <person name="Lee J.M."/>
            <person name="Toriumi M.J."/>
            <person name="Chan M.M."/>
            <person name="Tang C.C."/>
            <person name="Onodera C.S."/>
            <person name="Deng J.M."/>
            <person name="Akiyama K."/>
            <person name="Ansari Y."/>
            <person name="Arakawa T."/>
            <person name="Banh J."/>
            <person name="Banno F."/>
            <person name="Bowser L."/>
            <person name="Brooks S.Y."/>
            <person name="Carninci P."/>
            <person name="Chao Q."/>
            <person name="Choy N."/>
            <person name="Enju A."/>
            <person name="Goldsmith A.D."/>
            <person name="Gurjal M."/>
            <person name="Hansen N.F."/>
            <person name="Hayashizaki Y."/>
            <person name="Johnson-Hopson C."/>
            <person name="Hsuan V.W."/>
            <person name="Iida K."/>
            <person name="Karnes M."/>
            <person name="Khan S."/>
            <person name="Koesema E."/>
            <person name="Ishida J."/>
            <person name="Jiang P.X."/>
            <person name="Jones T."/>
            <person name="Kawai J."/>
            <person name="Kamiya A."/>
            <person name="Meyers C."/>
            <person name="Nakajima M."/>
            <person name="Narusaka M."/>
            <person name="Seki M."/>
            <person name="Sakurai T."/>
            <person name="Satou M."/>
            <person name="Tamse R."/>
            <person name="Vaysberg M."/>
            <person name="Wallender E.K."/>
            <person name="Wong C."/>
            <person name="Yamamura Y."/>
            <person name="Yuan S."/>
            <person name="Shinozaki K."/>
            <person name="Davis R.W."/>
            <person name="Theologis A."/>
            <person name="Ecker J.R."/>
        </authorList>
    </citation>
    <scope>NUCLEOTIDE SEQUENCE [LARGE SCALE MRNA]</scope>
    <source>
        <strain>cv. Columbia</strain>
    </source>
</reference>
<reference key="4">
    <citation type="submission" date="2006-07" db="EMBL/GenBank/DDBJ databases">
        <title>Large-scale analysis of RIKEN Arabidopsis full-length (RAFL) cDNAs.</title>
        <authorList>
            <person name="Totoki Y."/>
            <person name="Seki M."/>
            <person name="Ishida J."/>
            <person name="Nakajima M."/>
            <person name="Enju A."/>
            <person name="Kamiya A."/>
            <person name="Narusaka M."/>
            <person name="Shin-i T."/>
            <person name="Nakagawa M."/>
            <person name="Sakamoto N."/>
            <person name="Oishi K."/>
            <person name="Kohara Y."/>
            <person name="Kobayashi M."/>
            <person name="Toyoda A."/>
            <person name="Sakaki Y."/>
            <person name="Sakurai T."/>
            <person name="Iida K."/>
            <person name="Akiyama K."/>
            <person name="Satou M."/>
            <person name="Toyoda T."/>
            <person name="Konagaya A."/>
            <person name="Carninci P."/>
            <person name="Kawai J."/>
            <person name="Hayashizaki Y."/>
            <person name="Shinozaki K."/>
        </authorList>
    </citation>
    <scope>NUCLEOTIDE SEQUENCE [LARGE SCALE MRNA]</scope>
    <source>
        <strain>cv. Columbia</strain>
    </source>
</reference>
<reference key="5">
    <citation type="journal article" date="2009" name="BMC Genomics">
        <title>Comparative analysis of plant genomes allows the definition of the 'Phytolongins': a novel non-SNARE longin domain protein family.</title>
        <authorList>
            <person name="Vedovato M."/>
            <person name="Rossi V."/>
            <person name="Dacks J.B."/>
            <person name="Filippini F."/>
        </authorList>
    </citation>
    <scope>FUNCTION</scope>
    <scope>GENE FAMILY</scope>
    <scope>NOMENCLATURE</scope>
</reference>